<gene>
    <name type="primary">yiaD</name>
    <name type="ordered locus">b3552</name>
    <name type="ordered locus">JW5657</name>
</gene>
<accession>P37665</accession>
<accession>Q2M7L3</accession>
<accession>Q6BF24</accession>
<protein>
    <recommendedName>
        <fullName>Probable lipoprotein YiaD</fullName>
    </recommendedName>
</protein>
<reference key="1">
    <citation type="journal article" date="1994" name="Nucleic Acids Res.">
        <title>Analysis of the Escherichia coli genome. V. DNA sequence of the region from 76.0 to 81.5 minutes.</title>
        <authorList>
            <person name="Sofia H.J."/>
            <person name="Burland V."/>
            <person name="Daniels D.L."/>
            <person name="Plunkett G. III"/>
            <person name="Blattner F.R."/>
        </authorList>
    </citation>
    <scope>NUCLEOTIDE SEQUENCE [LARGE SCALE GENOMIC DNA]</scope>
    <source>
        <strain>K12 / MG1655 / ATCC 47076</strain>
    </source>
</reference>
<reference key="2">
    <citation type="journal article" date="1997" name="Science">
        <title>The complete genome sequence of Escherichia coli K-12.</title>
        <authorList>
            <person name="Blattner F.R."/>
            <person name="Plunkett G. III"/>
            <person name="Bloch C.A."/>
            <person name="Perna N.T."/>
            <person name="Burland V."/>
            <person name="Riley M."/>
            <person name="Collado-Vides J."/>
            <person name="Glasner J.D."/>
            <person name="Rode C.K."/>
            <person name="Mayhew G.F."/>
            <person name="Gregor J."/>
            <person name="Davis N.W."/>
            <person name="Kirkpatrick H.A."/>
            <person name="Goeden M.A."/>
            <person name="Rose D.J."/>
            <person name="Mau B."/>
            <person name="Shao Y."/>
        </authorList>
    </citation>
    <scope>NUCLEOTIDE SEQUENCE [LARGE SCALE GENOMIC DNA]</scope>
    <source>
        <strain>K12 / MG1655 / ATCC 47076</strain>
    </source>
</reference>
<reference key="3">
    <citation type="journal article" date="2006" name="Nucleic Acids Res.">
        <title>Escherichia coli K-12: a cooperatively developed annotation snapshot -- 2005.</title>
        <authorList>
            <person name="Riley M."/>
            <person name="Abe T."/>
            <person name="Arnaud M.B."/>
            <person name="Berlyn M.K.B."/>
            <person name="Blattner F.R."/>
            <person name="Chaudhuri R.R."/>
            <person name="Glasner J.D."/>
            <person name="Horiuchi T."/>
            <person name="Keseler I.M."/>
            <person name="Kosuge T."/>
            <person name="Mori H."/>
            <person name="Perna N.T."/>
            <person name="Plunkett G. III"/>
            <person name="Rudd K.E."/>
            <person name="Serres M.H."/>
            <person name="Thomas G.H."/>
            <person name="Thomson N.R."/>
            <person name="Wishart D."/>
            <person name="Wanner B.L."/>
        </authorList>
    </citation>
    <scope>SEQUENCE REVISION TO 87-88</scope>
</reference>
<reference key="4">
    <citation type="journal article" date="2006" name="Mol. Syst. Biol.">
        <title>Highly accurate genome sequences of Escherichia coli K-12 strains MG1655 and W3110.</title>
        <authorList>
            <person name="Hayashi K."/>
            <person name="Morooka N."/>
            <person name="Yamamoto Y."/>
            <person name="Fujita K."/>
            <person name="Isono K."/>
            <person name="Choi S."/>
            <person name="Ohtsubo E."/>
            <person name="Baba T."/>
            <person name="Wanner B.L."/>
            <person name="Mori H."/>
            <person name="Horiuchi T."/>
        </authorList>
    </citation>
    <scope>NUCLEOTIDE SEQUENCE [LARGE SCALE GENOMIC DNA]</scope>
    <source>
        <strain>K12 / W3110 / ATCC 27325 / DSM 5911</strain>
    </source>
</reference>
<reference key="5">
    <citation type="journal article" date="1990" name="J. Bacteriol.">
        <title>Cloning and nucleotide sequence of bisC, the structural gene for biotin sulfoxide reductase in Escherichia coli.</title>
        <authorList>
            <person name="Pierson D.E."/>
            <person name="Campbell A."/>
        </authorList>
    </citation>
    <scope>NUCLEOTIDE SEQUENCE [GENOMIC DNA] OF 1-104</scope>
</reference>
<reference key="6">
    <citation type="journal article" date="2005" name="Science">
        <title>Global topology analysis of the Escherichia coli inner membrane proteome.</title>
        <authorList>
            <person name="Daley D.O."/>
            <person name="Rapp M."/>
            <person name="Granseth E."/>
            <person name="Melen K."/>
            <person name="Drew D."/>
            <person name="von Heijne G."/>
        </authorList>
    </citation>
    <scope>TOPOLOGY [LARGE SCALE ANALYSIS]</scope>
    <source>
        <strain>K12 / MG1655 / ATCC 47076</strain>
    </source>
</reference>
<reference key="7">
    <citation type="journal article" date="2011" name="Biosci. Biotechnol. Biochem.">
        <title>Suppression of the temperature-sensitive mutation of the bamD gene required for the assembly of outer membrane proteins by multicopy of the yiaD gene in Escherichia coli.</title>
        <authorList>
            <person name="Tachikawa T."/>
            <person name="Kato J."/>
        </authorList>
    </citation>
    <scope>FUNCTION</scope>
    <scope>PROBABLE SUBCELLULAR LOCATION</scope>
    <scope>DISRUPTION PHENOTYPE</scope>
    <scope>MUTAGENESIS OF PHE-116; GLY-150; ASP-153; GLY-156; LEU-164 AND ARG-168</scope>
</reference>
<reference key="8">
    <citation type="submission" date="2011-07" db="PDB data bank">
        <title>Solution NMR structure of the folded C-terminal fragment of YiaD from Escherichia coli. Northeast structural genomics consortium target er553.</title>
        <authorList>
            <consortium name="Northeast structural genomics consortium (NESG)"/>
        </authorList>
    </citation>
    <scope>STRUCTURE BY NMR OF 79-219</scope>
</reference>
<comment type="function">
    <text evidence="4">Suppresses temperature-sensitive mutations in BamB when overexpressed.</text>
</comment>
<comment type="subcellular location">
    <subcellularLocation>
        <location evidence="5">Cell inner membrane</location>
        <topology evidence="5">Multi-pass membrane protein</topology>
    </subcellularLocation>
    <subcellularLocation>
        <location evidence="5">Cell outer membrane</location>
        <topology evidence="5">Lipid-anchor</topology>
    </subcellularLocation>
</comment>
<comment type="disruption phenotype">
    <text evidence="4">No visible phenotype.</text>
</comment>
<comment type="sequence caution" evidence="5">
    <conflict type="frameshift">
        <sequence resource="EMBL" id="M34827"/>
    </conflict>
</comment>
<keyword id="KW-0002">3D-structure</keyword>
<keyword id="KW-0997">Cell inner membrane</keyword>
<keyword id="KW-1003">Cell membrane</keyword>
<keyword id="KW-0998">Cell outer membrane</keyword>
<keyword id="KW-0449">Lipoprotein</keyword>
<keyword id="KW-0472">Membrane</keyword>
<keyword id="KW-0564">Palmitate</keyword>
<keyword id="KW-1185">Reference proteome</keyword>
<keyword id="KW-0732">Signal</keyword>
<keyword id="KW-0812">Transmembrane</keyword>
<keyword id="KW-1133">Transmembrane helix</keyword>
<name>YIAD_ECOLI</name>
<dbReference type="EMBL" id="U00039">
    <property type="protein sequence ID" value="AAB18529.1"/>
    <property type="molecule type" value="Genomic_DNA"/>
</dbReference>
<dbReference type="EMBL" id="U00096">
    <property type="protein sequence ID" value="AAT48190.1"/>
    <property type="molecule type" value="Genomic_DNA"/>
</dbReference>
<dbReference type="EMBL" id="AP009048">
    <property type="protein sequence ID" value="BAE77743.1"/>
    <property type="molecule type" value="Genomic_DNA"/>
</dbReference>
<dbReference type="EMBL" id="M34827">
    <property type="status" value="NOT_ANNOTATED_CDS"/>
    <property type="molecule type" value="Genomic_DNA"/>
</dbReference>
<dbReference type="PIR" id="S47773">
    <property type="entry name" value="S47773"/>
</dbReference>
<dbReference type="RefSeq" id="WP_000747625.1">
    <property type="nucleotide sequence ID" value="NZ_STEB01000018.1"/>
</dbReference>
<dbReference type="RefSeq" id="YP_026228.1">
    <property type="nucleotide sequence ID" value="NC_000913.3"/>
</dbReference>
<dbReference type="PDB" id="2K1S">
    <property type="method" value="NMR"/>
    <property type="chains" value="A=79-219"/>
</dbReference>
<dbReference type="PDB" id="2N48">
    <property type="method" value="NMR"/>
    <property type="chains" value="A=79-219"/>
</dbReference>
<dbReference type="PDBsum" id="2K1S"/>
<dbReference type="PDBsum" id="2N48"/>
<dbReference type="BMRB" id="P37665"/>
<dbReference type="SMR" id="P37665"/>
<dbReference type="BioGRID" id="4261246">
    <property type="interactions" value="37"/>
</dbReference>
<dbReference type="FunCoup" id="P37665">
    <property type="interactions" value="134"/>
</dbReference>
<dbReference type="IntAct" id="P37665">
    <property type="interactions" value="3"/>
</dbReference>
<dbReference type="STRING" id="511145.b3552"/>
<dbReference type="TCDB" id="1.B.6.13.1">
    <property type="family name" value="the ompa-ompf porin (oop) family"/>
</dbReference>
<dbReference type="jPOST" id="P37665"/>
<dbReference type="PaxDb" id="511145-b3552"/>
<dbReference type="EnsemblBacteria" id="AAT48190">
    <property type="protein sequence ID" value="AAT48190"/>
    <property type="gene ID" value="b3552"/>
</dbReference>
<dbReference type="GeneID" id="948075"/>
<dbReference type="KEGG" id="ecj:JW5657"/>
<dbReference type="KEGG" id="eco:b3552"/>
<dbReference type="KEGG" id="ecoc:C3026_19255"/>
<dbReference type="PATRIC" id="fig|1411691.4.peg.3162"/>
<dbReference type="EchoBASE" id="EB2180"/>
<dbReference type="eggNOG" id="COG2885">
    <property type="taxonomic scope" value="Bacteria"/>
</dbReference>
<dbReference type="HOGENOM" id="CLU_016890_6_2_6"/>
<dbReference type="InParanoid" id="P37665"/>
<dbReference type="OMA" id="IGNYMDQ"/>
<dbReference type="OrthoDB" id="9782229at2"/>
<dbReference type="PhylomeDB" id="P37665"/>
<dbReference type="BioCyc" id="EcoCyc:EG12271-MONOMER"/>
<dbReference type="EvolutionaryTrace" id="P37665"/>
<dbReference type="PRO" id="PR:P37665"/>
<dbReference type="Proteomes" id="UP000000625">
    <property type="component" value="Chromosome"/>
</dbReference>
<dbReference type="GO" id="GO:0120101">
    <property type="term" value="C:bacterial-type flagellum stator complex"/>
    <property type="evidence" value="ECO:0000318"/>
    <property type="project" value="GO_Central"/>
</dbReference>
<dbReference type="GO" id="GO:0009279">
    <property type="term" value="C:cell outer membrane"/>
    <property type="evidence" value="ECO:0007669"/>
    <property type="project" value="UniProtKB-SubCell"/>
</dbReference>
<dbReference type="GO" id="GO:0071973">
    <property type="term" value="P:bacterial-type flagellum-dependent cell motility"/>
    <property type="evidence" value="ECO:0000318"/>
    <property type="project" value="GO_Central"/>
</dbReference>
<dbReference type="CDD" id="cd07185">
    <property type="entry name" value="OmpA_C-like"/>
    <property type="match status" value="1"/>
</dbReference>
<dbReference type="Gene3D" id="3.30.1330.60">
    <property type="entry name" value="OmpA-like domain"/>
    <property type="match status" value="1"/>
</dbReference>
<dbReference type="InterPro" id="IPR050330">
    <property type="entry name" value="Bact_OuterMem_StrucFunc"/>
</dbReference>
<dbReference type="InterPro" id="IPR039567">
    <property type="entry name" value="Gly-zipper"/>
</dbReference>
<dbReference type="InterPro" id="IPR006664">
    <property type="entry name" value="OMP_bac"/>
</dbReference>
<dbReference type="InterPro" id="IPR006665">
    <property type="entry name" value="OmpA-like"/>
</dbReference>
<dbReference type="InterPro" id="IPR006690">
    <property type="entry name" value="OMPA-like_CS"/>
</dbReference>
<dbReference type="InterPro" id="IPR036737">
    <property type="entry name" value="OmpA-like_sf"/>
</dbReference>
<dbReference type="NCBIfam" id="NF007804">
    <property type="entry name" value="PRK10510.1"/>
    <property type="match status" value="1"/>
</dbReference>
<dbReference type="PANTHER" id="PTHR30329:SF21">
    <property type="entry name" value="LIPOPROTEIN YIAD-RELATED"/>
    <property type="match status" value="1"/>
</dbReference>
<dbReference type="PANTHER" id="PTHR30329">
    <property type="entry name" value="STATOR ELEMENT OF FLAGELLAR MOTOR COMPLEX"/>
    <property type="match status" value="1"/>
</dbReference>
<dbReference type="Pfam" id="PF13488">
    <property type="entry name" value="Gly-zipper_Omp"/>
    <property type="match status" value="1"/>
</dbReference>
<dbReference type="Pfam" id="PF00691">
    <property type="entry name" value="OmpA"/>
    <property type="match status" value="1"/>
</dbReference>
<dbReference type="PRINTS" id="PR01023">
    <property type="entry name" value="NAFLGMOTY"/>
</dbReference>
<dbReference type="PRINTS" id="PR01021">
    <property type="entry name" value="OMPADOMAIN"/>
</dbReference>
<dbReference type="SUPFAM" id="SSF103088">
    <property type="entry name" value="OmpA-like"/>
    <property type="match status" value="1"/>
</dbReference>
<dbReference type="PROSITE" id="PS01068">
    <property type="entry name" value="OMPA_1"/>
    <property type="match status" value="1"/>
</dbReference>
<dbReference type="PROSITE" id="PS51123">
    <property type="entry name" value="OMPA_2"/>
    <property type="match status" value="1"/>
</dbReference>
<dbReference type="PROSITE" id="PS51257">
    <property type="entry name" value="PROKAR_LIPOPROTEIN"/>
    <property type="match status" value="1"/>
</dbReference>
<sequence length="219" mass="22197">MKKRVYLIAAVVSGALAVSGCTTNPYTGEREAGKSAIGAGLGSLVGAGIGALSSSKKDRGKGALIGAAAGAALGGGVGYYMDVQEAKLRDKMRGTGVSVTRSGDNIILNMPNNVTFDSSSATLKPAGANTLTGVAMVLKEYPKTAVNVIGYTDSTGGHDLNMRLSQQRADSVASALITQGVDASRIRTQGLGPANPIASNSTAEGKAQNRRVEITLSPL</sequence>
<proteinExistence type="evidence at protein level"/>
<feature type="signal peptide" evidence="2">
    <location>
        <begin position="1"/>
        <end position="20"/>
    </location>
</feature>
<feature type="chain" id="PRO_0000020134" description="Probable lipoprotein YiaD">
    <location>
        <begin position="21"/>
        <end position="219"/>
    </location>
</feature>
<feature type="transmembrane region" description="Helical" evidence="1">
    <location>
        <begin position="37"/>
        <end position="55"/>
    </location>
</feature>
<feature type="transmembrane region" description="Helical" evidence="1">
    <location>
        <begin position="62"/>
        <end position="84"/>
    </location>
</feature>
<feature type="domain" description="OmpA-like" evidence="3">
    <location>
        <begin position="103"/>
        <end position="219"/>
    </location>
</feature>
<feature type="lipid moiety-binding region" description="N-palmitoyl cysteine" evidence="2">
    <location>
        <position position="21"/>
    </location>
</feature>
<feature type="lipid moiety-binding region" description="S-diacylglycerol cysteine" evidence="2">
    <location>
        <position position="21"/>
    </location>
</feature>
<feature type="mutagenesis site" description="Does not suppress BamB ts-mutants." evidence="4">
    <original>F</original>
    <variation>A</variation>
    <location>
        <position position="116"/>
    </location>
</feature>
<feature type="mutagenesis site" description="Partially suppresses BamB ts-mutants." evidence="4">
    <original>G</original>
    <variation>A</variation>
    <location>
        <position position="150"/>
    </location>
</feature>
<feature type="mutagenesis site" description="Does not suppress BamB ts-mutants." evidence="4">
    <original>D</original>
    <variation>A</variation>
    <location>
        <position position="153"/>
    </location>
</feature>
<feature type="mutagenesis site" description="Does not suppress BamB ts-mutants." evidence="4">
    <original>G</original>
    <variation>A</variation>
    <location>
        <position position="156"/>
    </location>
</feature>
<feature type="mutagenesis site" description="Partially suppresses BamB ts-mutants." evidence="4">
    <original>L</original>
    <variation>A</variation>
    <location>
        <position position="164"/>
    </location>
</feature>
<feature type="mutagenesis site" description="Does not suppress BamB ts-mutants." evidence="4">
    <original>R</original>
    <variation>A</variation>
    <location>
        <position position="168"/>
    </location>
</feature>
<feature type="sequence conflict" description="In Ref. 1; AAB18529." evidence="5" ref="1">
    <original>KL</original>
    <variation>NV</variation>
    <location>
        <begin position="87"/>
        <end position="88"/>
    </location>
</feature>
<feature type="helix" evidence="6">
    <location>
        <begin position="82"/>
        <end position="91"/>
    </location>
</feature>
<feature type="turn" evidence="6">
    <location>
        <begin position="92"/>
        <end position="95"/>
    </location>
</feature>
<feature type="strand" evidence="6">
    <location>
        <begin position="98"/>
        <end position="102"/>
    </location>
</feature>
<feature type="strand" evidence="6">
    <location>
        <begin position="105"/>
        <end position="111"/>
    </location>
</feature>
<feature type="helix" evidence="6">
    <location>
        <begin position="112"/>
        <end position="115"/>
    </location>
</feature>
<feature type="strand" evidence="6">
    <location>
        <begin position="116"/>
        <end position="121"/>
    </location>
</feature>
<feature type="helix" evidence="6">
    <location>
        <begin position="125"/>
        <end position="140"/>
    </location>
</feature>
<feature type="strand" evidence="6">
    <location>
        <begin position="144"/>
        <end position="151"/>
    </location>
</feature>
<feature type="strand" evidence="7">
    <location>
        <begin position="153"/>
        <end position="156"/>
    </location>
</feature>
<feature type="helix" evidence="6">
    <location>
        <begin position="158"/>
        <end position="179"/>
    </location>
</feature>
<feature type="helix" evidence="6">
    <location>
        <begin position="183"/>
        <end position="185"/>
    </location>
</feature>
<feature type="strand" evidence="6">
    <location>
        <begin position="186"/>
        <end position="190"/>
    </location>
</feature>
<feature type="turn" evidence="6">
    <location>
        <begin position="192"/>
        <end position="194"/>
    </location>
</feature>
<feature type="strand" evidence="6">
    <location>
        <begin position="200"/>
        <end position="202"/>
    </location>
</feature>
<feature type="helix" evidence="6">
    <location>
        <begin position="203"/>
        <end position="209"/>
    </location>
</feature>
<feature type="strand" evidence="6">
    <location>
        <begin position="210"/>
        <end position="218"/>
    </location>
</feature>
<organism>
    <name type="scientific">Escherichia coli (strain K12)</name>
    <dbReference type="NCBI Taxonomy" id="83333"/>
    <lineage>
        <taxon>Bacteria</taxon>
        <taxon>Pseudomonadati</taxon>
        <taxon>Pseudomonadota</taxon>
        <taxon>Gammaproteobacteria</taxon>
        <taxon>Enterobacterales</taxon>
        <taxon>Enterobacteriaceae</taxon>
        <taxon>Escherichia</taxon>
    </lineage>
</organism>
<evidence type="ECO:0000255" key="1"/>
<evidence type="ECO:0000255" key="2">
    <source>
        <dbReference type="PROSITE-ProRule" id="PRU00303"/>
    </source>
</evidence>
<evidence type="ECO:0000255" key="3">
    <source>
        <dbReference type="PROSITE-ProRule" id="PRU00473"/>
    </source>
</evidence>
<evidence type="ECO:0000269" key="4">
    <source>
    </source>
</evidence>
<evidence type="ECO:0000305" key="5"/>
<evidence type="ECO:0007829" key="6">
    <source>
        <dbReference type="PDB" id="2K1S"/>
    </source>
</evidence>
<evidence type="ECO:0007829" key="7">
    <source>
        <dbReference type="PDB" id="2N48"/>
    </source>
</evidence>